<organism>
    <name type="scientific">Thomomys townsendii</name>
    <name type="common">Western pocket gopher</name>
    <dbReference type="NCBI Taxonomy" id="10012"/>
    <lineage>
        <taxon>Eukaryota</taxon>
        <taxon>Metazoa</taxon>
        <taxon>Chordata</taxon>
        <taxon>Craniata</taxon>
        <taxon>Vertebrata</taxon>
        <taxon>Euteleostomi</taxon>
        <taxon>Mammalia</taxon>
        <taxon>Eutheria</taxon>
        <taxon>Euarchontoglires</taxon>
        <taxon>Glires</taxon>
        <taxon>Rodentia</taxon>
        <taxon>Castorimorpha</taxon>
        <taxon>Geomyidae</taxon>
        <taxon>Thomomys</taxon>
    </lineage>
</organism>
<gene>
    <name type="primary">MT-CYB</name>
    <name type="synonym">COB</name>
    <name type="synonym">CYTB</name>
    <name type="synonym">MTCYB</name>
</gene>
<evidence type="ECO:0000250" key="1"/>
<evidence type="ECO:0000250" key="2">
    <source>
        <dbReference type="UniProtKB" id="P00157"/>
    </source>
</evidence>
<evidence type="ECO:0000255" key="3">
    <source>
        <dbReference type="PROSITE-ProRule" id="PRU00967"/>
    </source>
</evidence>
<evidence type="ECO:0000255" key="4">
    <source>
        <dbReference type="PROSITE-ProRule" id="PRU00968"/>
    </source>
</evidence>
<evidence type="ECO:0000305" key="5"/>
<reference key="1">
    <citation type="journal article" date="1998" name="Mol. Phylogenet. Evol.">
        <title>Phylogenetic relationships and geographic structure in pocket gophers in the genus Thomomys.</title>
        <authorList>
            <person name="Smith M.F."/>
        </authorList>
    </citation>
    <scope>NUCLEOTIDE SEQUENCE [GENOMIC DNA]</scope>
    <source>
        <strain>Isolate MVZ 163074</strain>
    </source>
</reference>
<reference key="2">
    <citation type="journal article" date="1989" name="Proc. Natl. Acad. Sci. U.S.A.">
        <title>Dynamics of mitochondrial DNA evolution in animals: amplification and sequencing with conserved primers.</title>
        <authorList>
            <person name="Kocher T.D."/>
            <person name="Thomas W.K."/>
            <person name="Meyer A."/>
            <person name="Edwards S.V."/>
            <person name="Paeaebo S."/>
            <person name="Villablanca F.X."/>
            <person name="Wilson A.C."/>
        </authorList>
    </citation>
    <scope>NUCLEOTIDE SEQUENCE [GENOMIC DNA] OF 47-125</scope>
</reference>
<feature type="chain" id="PRO_0000061664" description="Cytochrome b">
    <location>
        <begin position="1"/>
        <end position="379"/>
    </location>
</feature>
<feature type="transmembrane region" description="Helical" evidence="2">
    <location>
        <begin position="33"/>
        <end position="53"/>
    </location>
</feature>
<feature type="transmembrane region" description="Helical" evidence="2">
    <location>
        <begin position="77"/>
        <end position="98"/>
    </location>
</feature>
<feature type="transmembrane region" description="Helical" evidence="2">
    <location>
        <begin position="113"/>
        <end position="133"/>
    </location>
</feature>
<feature type="transmembrane region" description="Helical" evidence="2">
    <location>
        <begin position="178"/>
        <end position="198"/>
    </location>
</feature>
<feature type="transmembrane region" description="Helical" evidence="2">
    <location>
        <begin position="226"/>
        <end position="246"/>
    </location>
</feature>
<feature type="transmembrane region" description="Helical" evidence="2">
    <location>
        <begin position="288"/>
        <end position="308"/>
    </location>
</feature>
<feature type="transmembrane region" description="Helical" evidence="2">
    <location>
        <begin position="320"/>
        <end position="340"/>
    </location>
</feature>
<feature type="transmembrane region" description="Helical" evidence="2">
    <location>
        <begin position="347"/>
        <end position="367"/>
    </location>
</feature>
<feature type="binding site" description="axial binding residue" evidence="2">
    <location>
        <position position="83"/>
    </location>
    <ligand>
        <name>heme b</name>
        <dbReference type="ChEBI" id="CHEBI:60344"/>
        <label>b562</label>
    </ligand>
    <ligandPart>
        <name>Fe</name>
        <dbReference type="ChEBI" id="CHEBI:18248"/>
    </ligandPart>
</feature>
<feature type="binding site" description="axial binding residue" evidence="2">
    <location>
        <position position="97"/>
    </location>
    <ligand>
        <name>heme b</name>
        <dbReference type="ChEBI" id="CHEBI:60344"/>
        <label>b566</label>
    </ligand>
    <ligandPart>
        <name>Fe</name>
        <dbReference type="ChEBI" id="CHEBI:18248"/>
    </ligandPart>
</feature>
<feature type="binding site" description="axial binding residue" evidence="2">
    <location>
        <position position="182"/>
    </location>
    <ligand>
        <name>heme b</name>
        <dbReference type="ChEBI" id="CHEBI:60344"/>
        <label>b562</label>
    </ligand>
    <ligandPart>
        <name>Fe</name>
        <dbReference type="ChEBI" id="CHEBI:18248"/>
    </ligandPart>
</feature>
<feature type="binding site" description="axial binding residue" evidence="2">
    <location>
        <position position="196"/>
    </location>
    <ligand>
        <name>heme b</name>
        <dbReference type="ChEBI" id="CHEBI:60344"/>
        <label>b566</label>
    </ligand>
    <ligandPart>
        <name>Fe</name>
        <dbReference type="ChEBI" id="CHEBI:18248"/>
    </ligandPart>
</feature>
<feature type="binding site" evidence="2">
    <location>
        <position position="201"/>
    </location>
    <ligand>
        <name>a ubiquinone</name>
        <dbReference type="ChEBI" id="CHEBI:16389"/>
    </ligand>
</feature>
<feature type="sequence conflict" description="In Ref. 2; AAA32041." evidence="5" ref="2">
    <original>TG</original>
    <variation>SA</variation>
    <location>
        <begin position="47"/>
        <end position="48"/>
    </location>
</feature>
<feature type="sequence conflict" description="In Ref. 2; AAA32041." evidence="5" ref="2">
    <original>TLTA</original>
    <variation>SSNS</variation>
    <location>
        <begin position="59"/>
        <end position="62"/>
    </location>
</feature>
<feature type="sequence conflict" description="In Ref. 2; AAA32041." evidence="5" ref="2">
    <original>NF</original>
    <variation>SY</variation>
    <location>
        <begin position="74"/>
        <end position="75"/>
    </location>
</feature>
<feature type="sequence conflict" description="In Ref. 2; AAA32041." evidence="5" ref="2">
    <original>I</original>
    <variation>V</variation>
    <location>
        <position position="115"/>
    </location>
</feature>
<feature type="sequence conflict" description="In Ref. 2; AAA32041." evidence="5" ref="2">
    <original>T</original>
    <variation>S</variation>
    <location>
        <position position="123"/>
    </location>
</feature>
<dbReference type="EMBL" id="U65281">
    <property type="protein sequence ID" value="AAC40018.1"/>
    <property type="molecule type" value="Genomic_DNA"/>
</dbReference>
<dbReference type="EMBL" id="M25685">
    <property type="protein sequence ID" value="AAA32041.1"/>
    <property type="molecule type" value="Genomic_DNA"/>
</dbReference>
<dbReference type="PIR" id="E33285">
    <property type="entry name" value="E33285"/>
</dbReference>
<dbReference type="GO" id="GO:0005743">
    <property type="term" value="C:mitochondrial inner membrane"/>
    <property type="evidence" value="ECO:0007669"/>
    <property type="project" value="UniProtKB-SubCell"/>
</dbReference>
<dbReference type="GO" id="GO:0045275">
    <property type="term" value="C:respiratory chain complex III"/>
    <property type="evidence" value="ECO:0007669"/>
    <property type="project" value="InterPro"/>
</dbReference>
<dbReference type="GO" id="GO:0046872">
    <property type="term" value="F:metal ion binding"/>
    <property type="evidence" value="ECO:0007669"/>
    <property type="project" value="UniProtKB-KW"/>
</dbReference>
<dbReference type="GO" id="GO:0008121">
    <property type="term" value="F:ubiquinol-cytochrome-c reductase activity"/>
    <property type="evidence" value="ECO:0007669"/>
    <property type="project" value="InterPro"/>
</dbReference>
<dbReference type="GO" id="GO:0006122">
    <property type="term" value="P:mitochondrial electron transport, ubiquinol to cytochrome c"/>
    <property type="evidence" value="ECO:0007669"/>
    <property type="project" value="TreeGrafter"/>
</dbReference>
<dbReference type="CDD" id="cd00290">
    <property type="entry name" value="cytochrome_b_C"/>
    <property type="match status" value="1"/>
</dbReference>
<dbReference type="CDD" id="cd00284">
    <property type="entry name" value="Cytochrome_b_N"/>
    <property type="match status" value="1"/>
</dbReference>
<dbReference type="FunFam" id="1.20.810.10:FF:000002">
    <property type="entry name" value="Cytochrome b"/>
    <property type="match status" value="1"/>
</dbReference>
<dbReference type="Gene3D" id="1.20.810.10">
    <property type="entry name" value="Cytochrome Bc1 Complex, Chain C"/>
    <property type="match status" value="1"/>
</dbReference>
<dbReference type="InterPro" id="IPR005798">
    <property type="entry name" value="Cyt_b/b6_C"/>
</dbReference>
<dbReference type="InterPro" id="IPR036150">
    <property type="entry name" value="Cyt_b/b6_C_sf"/>
</dbReference>
<dbReference type="InterPro" id="IPR005797">
    <property type="entry name" value="Cyt_b/b6_N"/>
</dbReference>
<dbReference type="InterPro" id="IPR027387">
    <property type="entry name" value="Cytb/b6-like_sf"/>
</dbReference>
<dbReference type="InterPro" id="IPR030689">
    <property type="entry name" value="Cytochrome_b"/>
</dbReference>
<dbReference type="InterPro" id="IPR048260">
    <property type="entry name" value="Cytochrome_b_C_euk/bac"/>
</dbReference>
<dbReference type="InterPro" id="IPR048259">
    <property type="entry name" value="Cytochrome_b_N_euk/bac"/>
</dbReference>
<dbReference type="InterPro" id="IPR016174">
    <property type="entry name" value="Di-haem_cyt_TM"/>
</dbReference>
<dbReference type="PANTHER" id="PTHR19271">
    <property type="entry name" value="CYTOCHROME B"/>
    <property type="match status" value="1"/>
</dbReference>
<dbReference type="PANTHER" id="PTHR19271:SF16">
    <property type="entry name" value="CYTOCHROME B"/>
    <property type="match status" value="1"/>
</dbReference>
<dbReference type="Pfam" id="PF00032">
    <property type="entry name" value="Cytochrom_B_C"/>
    <property type="match status" value="1"/>
</dbReference>
<dbReference type="Pfam" id="PF00033">
    <property type="entry name" value="Cytochrome_B"/>
    <property type="match status" value="1"/>
</dbReference>
<dbReference type="PIRSF" id="PIRSF038885">
    <property type="entry name" value="COB"/>
    <property type="match status" value="1"/>
</dbReference>
<dbReference type="SUPFAM" id="SSF81648">
    <property type="entry name" value="a domain/subunit of cytochrome bc1 complex (Ubiquinol-cytochrome c reductase)"/>
    <property type="match status" value="1"/>
</dbReference>
<dbReference type="SUPFAM" id="SSF81342">
    <property type="entry name" value="Transmembrane di-heme cytochromes"/>
    <property type="match status" value="1"/>
</dbReference>
<dbReference type="PROSITE" id="PS51003">
    <property type="entry name" value="CYTB_CTER"/>
    <property type="match status" value="1"/>
</dbReference>
<dbReference type="PROSITE" id="PS51002">
    <property type="entry name" value="CYTB_NTER"/>
    <property type="match status" value="1"/>
</dbReference>
<sequence>MTIMRKSHPLFKIVNHAFIDLPTPPNISGWWNFGSLLGMCLILQILTGLFLAMHYTSDTLTAFSSVTHICRDVNFGWLIRYMHANGASLFFICLYIHIGRGIYYGSYLYKETWNIGILLLFLTMATAFVGYVLPWGQMSFWGATVITNLLSAIPYIGQDLVEWIWGGFSVDKATLTRFFAFHFILPFIIAALAMXHLLFLHETGSNNPLGIPSDSDKIPFHPYYSTKDFLGAIMLIMLFMTLVLYFPDKLGDPDNYTPANXLNTPPHIKPEWYFLFAYAILRSIPNKLGGVVALILSILVLALLPYLHTSNQRSLLFRPLSQFLFWTLVSDLLLLTWIGGQPVEPPFIIIGQMASILYFSIIXIFMPLAGLIENKMLKW</sequence>
<name>CYB_THOTO</name>
<keyword id="KW-0249">Electron transport</keyword>
<keyword id="KW-0349">Heme</keyword>
<keyword id="KW-0408">Iron</keyword>
<keyword id="KW-0472">Membrane</keyword>
<keyword id="KW-0479">Metal-binding</keyword>
<keyword id="KW-0496">Mitochondrion</keyword>
<keyword id="KW-0999">Mitochondrion inner membrane</keyword>
<keyword id="KW-0679">Respiratory chain</keyword>
<keyword id="KW-0812">Transmembrane</keyword>
<keyword id="KW-1133">Transmembrane helix</keyword>
<keyword id="KW-0813">Transport</keyword>
<keyword id="KW-0830">Ubiquinone</keyword>
<protein>
    <recommendedName>
        <fullName>Cytochrome b</fullName>
    </recommendedName>
    <alternativeName>
        <fullName>Complex III subunit 3</fullName>
    </alternativeName>
    <alternativeName>
        <fullName>Complex III subunit III</fullName>
    </alternativeName>
    <alternativeName>
        <fullName>Cytochrome b-c1 complex subunit 3</fullName>
    </alternativeName>
    <alternativeName>
        <fullName>Ubiquinol-cytochrome-c reductase complex cytochrome b subunit</fullName>
    </alternativeName>
</protein>
<proteinExistence type="inferred from homology"/>
<geneLocation type="mitochondrion"/>
<comment type="function">
    <text evidence="2">Component of the ubiquinol-cytochrome c reductase complex (complex III or cytochrome b-c1 complex) that is part of the mitochondrial respiratory chain. The b-c1 complex mediates electron transfer from ubiquinol to cytochrome c. Contributes to the generation of a proton gradient across the mitochondrial membrane that is then used for ATP synthesis.</text>
</comment>
<comment type="cofactor">
    <cofactor evidence="2">
        <name>heme b</name>
        <dbReference type="ChEBI" id="CHEBI:60344"/>
    </cofactor>
    <text evidence="2">Binds 2 heme b groups non-covalently.</text>
</comment>
<comment type="subunit">
    <text evidence="2">The cytochrome bc1 complex contains 11 subunits: 3 respiratory subunits (MT-CYB, CYC1 and UQCRFS1), 2 core proteins (UQCRC1 and UQCRC2) and 6 low-molecular weight proteins (UQCRH/QCR6, UQCRB/QCR7, UQCRQ/QCR8, UQCR10/QCR9, UQCR11/QCR10 and a cleavage product of UQCRFS1). This cytochrome bc1 complex then forms a dimer.</text>
</comment>
<comment type="subcellular location">
    <subcellularLocation>
        <location evidence="2">Mitochondrion inner membrane</location>
        <topology evidence="2">Multi-pass membrane protein</topology>
    </subcellularLocation>
</comment>
<comment type="miscellaneous">
    <text evidence="1">Heme 1 (or BL or b562) is low-potential and absorbs at about 562 nm, and heme 2 (or BH or b566) is high-potential and absorbs at about 566 nm.</text>
</comment>
<comment type="similarity">
    <text evidence="3 4">Belongs to the cytochrome b family.</text>
</comment>
<comment type="caution">
    <text evidence="2">The full-length protein contains only eight transmembrane helices, not nine as predicted by bioinformatics tools.</text>
</comment>
<accession>P16360</accession>
<accession>O47991</accession>